<reference key="1">
    <citation type="journal article" date="2002" name="J. Mol. Microbiol. Biotechnol.">
        <title>The genome of Methanosarcina mazei: evidence for lateral gene transfer between Bacteria and Archaea.</title>
        <authorList>
            <person name="Deppenmeier U."/>
            <person name="Johann A."/>
            <person name="Hartsch T."/>
            <person name="Merkl R."/>
            <person name="Schmitz R.A."/>
            <person name="Martinez-Arias R."/>
            <person name="Henne A."/>
            <person name="Wiezer A."/>
            <person name="Baeumer S."/>
            <person name="Jacobi C."/>
            <person name="Brueggemann H."/>
            <person name="Lienard T."/>
            <person name="Christmann A."/>
            <person name="Boemecke M."/>
            <person name="Steckel S."/>
            <person name="Bhattacharyya A."/>
            <person name="Lykidis A."/>
            <person name="Overbeek R."/>
            <person name="Klenk H.-P."/>
            <person name="Gunsalus R.P."/>
            <person name="Fritz H.-J."/>
            <person name="Gottschalk G."/>
        </authorList>
    </citation>
    <scope>NUCLEOTIDE SEQUENCE [LARGE SCALE GENOMIC DNA]</scope>
    <source>
        <strain>ATCC BAA-159 / DSM 3647 / Goe1 / Go1 / JCM 11833 / OCM 88</strain>
    </source>
</reference>
<accession>Q8PXV8</accession>
<proteinExistence type="inferred from homology"/>
<feature type="chain" id="PRO_0000075040" description="F420-dependent methylenetetrahydromethanopterin dehydrogenase">
    <location>
        <begin position="1"/>
        <end position="279"/>
    </location>
</feature>
<organism>
    <name type="scientific">Methanosarcina mazei (strain ATCC BAA-159 / DSM 3647 / Goe1 / Go1 / JCM 11833 / OCM 88)</name>
    <name type="common">Methanosarcina frisia</name>
    <dbReference type="NCBI Taxonomy" id="192952"/>
    <lineage>
        <taxon>Archaea</taxon>
        <taxon>Methanobacteriati</taxon>
        <taxon>Methanobacteriota</taxon>
        <taxon>Stenosarchaea group</taxon>
        <taxon>Methanomicrobia</taxon>
        <taxon>Methanosarcinales</taxon>
        <taxon>Methanosarcinaceae</taxon>
        <taxon>Methanosarcina</taxon>
    </lineage>
</organism>
<comment type="function">
    <text evidence="1">Catalyzes the reversible reduction of methenyl-H(4)MPT(+) to methylene-H(4)MPT.</text>
</comment>
<comment type="catalytic activity">
    <reaction>
        <text>5,10-methylenetetrahydromethanopterin + oxidized coenzyme F420-(gamma-L-Glu)(n) + 2 H(+) = 5,10-methenyl-5,6,7,8-tetrahydromethanopterin + reduced coenzyme F420-(gamma-L-Glu)(n)</text>
        <dbReference type="Rhea" id="RHEA:16721"/>
        <dbReference type="Rhea" id="RHEA-COMP:12939"/>
        <dbReference type="Rhea" id="RHEA-COMP:14378"/>
        <dbReference type="ChEBI" id="CHEBI:15378"/>
        <dbReference type="ChEBI" id="CHEBI:57818"/>
        <dbReference type="ChEBI" id="CHEBI:58337"/>
        <dbReference type="ChEBI" id="CHEBI:133980"/>
        <dbReference type="ChEBI" id="CHEBI:139511"/>
        <dbReference type="EC" id="1.5.98.1"/>
    </reaction>
</comment>
<comment type="pathway">
    <text>One-carbon metabolism; methanogenesis from CO(2); 5,10-methylene-5,6,7,8-tetrahydromethanopterin from 5,10-methenyl-5,6,7,8-tetrahydromethanopterin (coenzyme F420 route): step 1/1.</text>
</comment>
<comment type="similarity">
    <text evidence="2">Belongs to the MTD family.</text>
</comment>
<protein>
    <recommendedName>
        <fullName>F420-dependent methylenetetrahydromethanopterin dehydrogenase</fullName>
        <shortName>MTD</shortName>
        <ecNumber>1.5.98.1</ecNumber>
    </recommendedName>
    <alternativeName>
        <fullName>Coenzyme F420-dependent N5,N10-methylenetetrahydromethanopterin dehydrogenase</fullName>
    </alternativeName>
</protein>
<name>MTD_METMA</name>
<evidence type="ECO:0000250" key="1"/>
<evidence type="ECO:0000305" key="2"/>
<gene>
    <name type="primary">mtd</name>
    <name type="ordered locus">MM_1108</name>
</gene>
<keyword id="KW-0484">Methanogenesis</keyword>
<keyword id="KW-0554">One-carbon metabolism</keyword>
<keyword id="KW-0560">Oxidoreductase</keyword>
<dbReference type="EC" id="1.5.98.1"/>
<dbReference type="EMBL" id="AE008384">
    <property type="protein sequence ID" value="AAM30804.1"/>
    <property type="molecule type" value="Genomic_DNA"/>
</dbReference>
<dbReference type="SMR" id="Q8PXV8"/>
<dbReference type="KEGG" id="mma:MM_1108"/>
<dbReference type="PATRIC" id="fig|192952.21.peg.1297"/>
<dbReference type="eggNOG" id="arCOG04382">
    <property type="taxonomic scope" value="Archaea"/>
</dbReference>
<dbReference type="HOGENOM" id="CLU_1006890_0_0_2"/>
<dbReference type="UniPathway" id="UPA00640">
    <property type="reaction ID" value="UER00695"/>
</dbReference>
<dbReference type="Proteomes" id="UP000000595">
    <property type="component" value="Chromosome"/>
</dbReference>
<dbReference type="GO" id="GO:0008901">
    <property type="term" value="F:ferredoxin hydrogenase activity"/>
    <property type="evidence" value="ECO:0007669"/>
    <property type="project" value="InterPro"/>
</dbReference>
<dbReference type="GO" id="GO:0030268">
    <property type="term" value="F:methylenetetrahydromethanopterin dehydrogenase activity"/>
    <property type="evidence" value="ECO:0007669"/>
    <property type="project" value="UniProtKB-UniRule"/>
</dbReference>
<dbReference type="GO" id="GO:0019386">
    <property type="term" value="P:methanogenesis, from carbon dioxide"/>
    <property type="evidence" value="ECO:0007669"/>
    <property type="project" value="UniProtKB-UniRule"/>
</dbReference>
<dbReference type="GO" id="GO:0006730">
    <property type="term" value="P:one-carbon metabolic process"/>
    <property type="evidence" value="ECO:0007669"/>
    <property type="project" value="UniProtKB-UniRule"/>
</dbReference>
<dbReference type="Gene3D" id="6.10.140.120">
    <property type="match status" value="1"/>
</dbReference>
<dbReference type="Gene3D" id="3.40.50.10830">
    <property type="entry name" value="F420-dependent methylenetetrahydromethanopterin dehydrogenase (MTD)"/>
    <property type="match status" value="1"/>
</dbReference>
<dbReference type="HAMAP" id="MF_00058">
    <property type="entry name" value="MTD"/>
    <property type="match status" value="1"/>
</dbReference>
<dbReference type="InterPro" id="IPR002844">
    <property type="entry name" value="MTD"/>
</dbReference>
<dbReference type="InterPro" id="IPR036080">
    <property type="entry name" value="MTD_sf"/>
</dbReference>
<dbReference type="NCBIfam" id="NF002162">
    <property type="entry name" value="PRK00994.1"/>
    <property type="match status" value="1"/>
</dbReference>
<dbReference type="Pfam" id="PF01993">
    <property type="entry name" value="MTD"/>
    <property type="match status" value="1"/>
</dbReference>
<dbReference type="PIRSF" id="PIRSF005627">
    <property type="entry name" value="MTD"/>
    <property type="match status" value="1"/>
</dbReference>
<dbReference type="SUPFAM" id="SSF102324">
    <property type="entry name" value="F420-dependent methylenetetrahydromethanopterin dehydrogenase (MTD)"/>
    <property type="match status" value="1"/>
</dbReference>
<sequence>MKKMVNIGFIKMGNLGMSQVINLIQDEIAAREGITVRVFGTGAKMAPADAADTESFKQWNADFVVIISPNAAAPGPTAAREIWKDVPCIIVSDGPTKKEAREAFEQEGFGYIILPVDPLIGAKREFLDSVEMASFNADAMKVLSICGVVRLIQEELDKVTEQVASGKSGKDLELPHIFAKPEKCVEHAGFANPYAKSKALAALHMAEKVAQVNFPACFMLKEIEQVCLTAAAGHEIMGAAAQLANQAREIEKSNDTVSRMPHAKNGAVLKKVRLYEKPE</sequence>